<evidence type="ECO:0000255" key="1">
    <source>
        <dbReference type="HAMAP-Rule" id="MF_01532"/>
    </source>
</evidence>
<name>RHAT_YERPA</name>
<reference key="1">
    <citation type="journal article" date="2006" name="J. Bacteriol.">
        <title>Complete genome sequence of Yersinia pestis strains Antiqua and Nepal516: evidence of gene reduction in an emerging pathogen.</title>
        <authorList>
            <person name="Chain P.S.G."/>
            <person name="Hu P."/>
            <person name="Malfatti S.A."/>
            <person name="Radnedge L."/>
            <person name="Larimer F."/>
            <person name="Vergez L.M."/>
            <person name="Worsham P."/>
            <person name="Chu M.C."/>
            <person name="Andersen G.L."/>
        </authorList>
    </citation>
    <scope>NUCLEOTIDE SEQUENCE [LARGE SCALE GENOMIC DNA]</scope>
    <source>
        <strain>Antiqua</strain>
    </source>
</reference>
<gene>
    <name evidence="1" type="primary">rhaT</name>
    <name type="ordered locus">YPA_3947</name>
</gene>
<accession>Q1C0W4</accession>
<organism>
    <name type="scientific">Yersinia pestis bv. Antiqua (strain Antiqua)</name>
    <dbReference type="NCBI Taxonomy" id="360102"/>
    <lineage>
        <taxon>Bacteria</taxon>
        <taxon>Pseudomonadati</taxon>
        <taxon>Pseudomonadota</taxon>
        <taxon>Gammaproteobacteria</taxon>
        <taxon>Enterobacterales</taxon>
        <taxon>Yersiniaceae</taxon>
        <taxon>Yersinia</taxon>
    </lineage>
</organism>
<comment type="function">
    <text evidence="1">Uptake of L-rhamnose across the cytoplasmic membrane with the concomitant transport of protons into the cell (symport system).</text>
</comment>
<comment type="catalytic activity">
    <reaction evidence="1">
        <text>L-rhamnopyranose(in) + H(+)(in) = L-rhamnopyranose(out) + H(+)(out)</text>
        <dbReference type="Rhea" id="RHEA:29947"/>
        <dbReference type="ChEBI" id="CHEBI:15378"/>
        <dbReference type="ChEBI" id="CHEBI:62346"/>
    </reaction>
    <physiologicalReaction direction="right-to-left" evidence="1">
        <dbReference type="Rhea" id="RHEA:29949"/>
    </physiologicalReaction>
</comment>
<comment type="subcellular location">
    <subcellularLocation>
        <location evidence="1">Cell inner membrane</location>
        <topology evidence="1">Multi-pass membrane protein</topology>
    </subcellularLocation>
</comment>
<comment type="similarity">
    <text evidence="1">Belongs to the L-rhamnose transporter (TC 2.A.7.6) family.</text>
</comment>
<feature type="chain" id="PRO_0000292769" description="L-rhamnose-proton symporter">
    <location>
        <begin position="1"/>
        <end position="343"/>
    </location>
</feature>
<feature type="transmembrane region" description="Helical" evidence="1">
    <location>
        <begin position="4"/>
        <end position="24"/>
    </location>
</feature>
<feature type="transmembrane region" description="Helical" evidence="1">
    <location>
        <begin position="38"/>
        <end position="58"/>
    </location>
</feature>
<feature type="transmembrane region" description="Helical" evidence="1">
    <location>
        <begin position="68"/>
        <end position="88"/>
    </location>
</feature>
<feature type="transmembrane region" description="Helical" evidence="1">
    <location>
        <begin position="101"/>
        <end position="121"/>
    </location>
</feature>
<feature type="transmembrane region" description="Helical" evidence="1">
    <location>
        <begin position="137"/>
        <end position="157"/>
    </location>
</feature>
<feature type="transmembrane region" description="Helical" evidence="1">
    <location>
        <begin position="175"/>
        <end position="195"/>
    </location>
</feature>
<feature type="transmembrane region" description="Helical" evidence="1">
    <location>
        <begin position="207"/>
        <end position="227"/>
    </location>
</feature>
<feature type="transmembrane region" description="Helical" evidence="1">
    <location>
        <begin position="254"/>
        <end position="274"/>
    </location>
</feature>
<feature type="transmembrane region" description="Helical" evidence="1">
    <location>
        <begin position="289"/>
        <end position="309"/>
    </location>
</feature>
<feature type="transmembrane region" description="Helical" evidence="1">
    <location>
        <begin position="320"/>
        <end position="340"/>
    </location>
</feature>
<keyword id="KW-0997">Cell inner membrane</keyword>
<keyword id="KW-1003">Cell membrane</keyword>
<keyword id="KW-0472">Membrane</keyword>
<keyword id="KW-0762">Sugar transport</keyword>
<keyword id="KW-0769">Symport</keyword>
<keyword id="KW-0812">Transmembrane</keyword>
<keyword id="KW-1133">Transmembrane helix</keyword>
<keyword id="KW-0813">Transport</keyword>
<proteinExistence type="inferred from homology"/>
<sequence>MNNAIILGIIWHLVGAASAACFYAPFKQVKKWSWETMWSIGGLVSWLILPWTVSYLLLPDFWQYYGSFSIATLLPVFLFGAMWGIGNINYGLTMRYLGMSMGIGIAIGITLIIGTLMTPILQGRFDVLLGTPGGRMTLLGVFVALIGVAIVSYAGLLKERAMGIQAEEFNLKKGLILAVMCGIFSAGMSFAMDAAKPMHEAASALGINSLYVALPSYVIIMGGGAIINLSYCFIRLATLKNLSVKADFSVAKPLLITNILFSALAGLMWYLQFFYAWGHAKIPQQYDYMSWMLHMSFYVLCGGIVGLLLKEWKCSTKKPVAVLCIGCLVIILAANIVGLGMAA</sequence>
<dbReference type="EMBL" id="CP000308">
    <property type="protein sequence ID" value="ABG15908.1"/>
    <property type="molecule type" value="Genomic_DNA"/>
</dbReference>
<dbReference type="RefSeq" id="WP_002221177.1">
    <property type="nucleotide sequence ID" value="NC_008150.1"/>
</dbReference>
<dbReference type="KEGG" id="ypa:YPA_3947"/>
<dbReference type="Proteomes" id="UP000001971">
    <property type="component" value="Chromosome"/>
</dbReference>
<dbReference type="GO" id="GO:0005886">
    <property type="term" value="C:plasma membrane"/>
    <property type="evidence" value="ECO:0007669"/>
    <property type="project" value="UniProtKB-SubCell"/>
</dbReference>
<dbReference type="GO" id="GO:0015153">
    <property type="term" value="F:rhamnose transmembrane transporter activity"/>
    <property type="evidence" value="ECO:0007669"/>
    <property type="project" value="UniProtKB-UniRule"/>
</dbReference>
<dbReference type="GO" id="GO:0015293">
    <property type="term" value="F:symporter activity"/>
    <property type="evidence" value="ECO:0007669"/>
    <property type="project" value="UniProtKB-KW"/>
</dbReference>
<dbReference type="HAMAP" id="MF_01532">
    <property type="entry name" value="RhaT"/>
    <property type="match status" value="1"/>
</dbReference>
<dbReference type="InterPro" id="IPR004673">
    <property type="entry name" value="L-rhamnose-proton_sym_RhaT"/>
</dbReference>
<dbReference type="NCBIfam" id="NF010021">
    <property type="entry name" value="PRK13499.1-1"/>
    <property type="match status" value="1"/>
</dbReference>
<dbReference type="NCBIfam" id="NF010023">
    <property type="entry name" value="PRK13499.1-3"/>
    <property type="match status" value="1"/>
</dbReference>
<dbReference type="NCBIfam" id="TIGR00776">
    <property type="entry name" value="RhaT"/>
    <property type="match status" value="1"/>
</dbReference>
<dbReference type="Pfam" id="PF06379">
    <property type="entry name" value="RhaT"/>
    <property type="match status" value="1"/>
</dbReference>
<protein>
    <recommendedName>
        <fullName evidence="1">L-rhamnose-proton symporter</fullName>
    </recommendedName>
    <alternativeName>
        <fullName evidence="1">L-rhamnose-H(+) transport protein</fullName>
    </alternativeName>
</protein>